<feature type="initiator methionine" description="Removed" evidence="4">
    <location>
        <position position="1"/>
    </location>
</feature>
<feature type="chain" id="PRO_0000184688" description="Coenzyme A disulfide reductase">
    <location>
        <begin position="2"/>
        <end position="438"/>
    </location>
</feature>
<feature type="active site" description="Nucleophile" evidence="2">
    <location>
        <position position="43"/>
    </location>
</feature>
<feature type="active site" description="Redox-active" evidence="2">
    <location>
        <position position="43"/>
    </location>
</feature>
<feature type="binding site" evidence="3">
    <location>
        <begin position="8"/>
        <end position="33"/>
    </location>
    <ligand>
        <name>FAD</name>
        <dbReference type="ChEBI" id="CHEBI:57692"/>
    </ligand>
</feature>
<feature type="binding site" evidence="3">
    <location>
        <position position="15"/>
    </location>
    <ligand>
        <name>substrate</name>
    </ligand>
</feature>
<feature type="binding site" evidence="3">
    <location>
        <position position="19"/>
    </location>
    <ligand>
        <name>substrate</name>
    </ligand>
</feature>
<feature type="binding site" evidence="3">
    <location>
        <position position="22"/>
    </location>
    <ligand>
        <name>substrate</name>
    </ligand>
</feature>
<feature type="binding site" evidence="3">
    <location>
        <position position="39"/>
    </location>
    <ligand>
        <name>substrate</name>
    </ligand>
</feature>
<feature type="binding site" evidence="3">
    <location>
        <position position="42"/>
    </location>
    <ligand>
        <name>substrate</name>
    </ligand>
</feature>
<feature type="binding site" evidence="3">
    <location>
        <position position="71"/>
    </location>
    <ligand>
        <name>substrate</name>
    </ligand>
</feature>
<feature type="binding site" evidence="1">
    <location>
        <begin position="151"/>
        <end position="166"/>
    </location>
    <ligand>
        <name>NADP(+)</name>
        <dbReference type="ChEBI" id="CHEBI:58349"/>
    </ligand>
</feature>
<feature type="binding site" evidence="3">
    <location>
        <begin position="267"/>
        <end position="277"/>
    </location>
    <ligand>
        <name>FAD</name>
        <dbReference type="ChEBI" id="CHEBI:57692"/>
    </ligand>
</feature>
<feature type="binding site" evidence="3">
    <location>
        <position position="299"/>
    </location>
    <ligand>
        <name>substrate</name>
    </ligand>
</feature>
<feature type="binding site" evidence="3">
    <location>
        <position position="419"/>
    </location>
    <ligand>
        <name>FAD</name>
        <dbReference type="ChEBI" id="CHEBI:57692"/>
    </ligand>
</feature>
<feature type="binding site" evidence="3">
    <location>
        <position position="427"/>
    </location>
    <ligand>
        <name>substrate</name>
    </ligand>
</feature>
<feature type="mutagenesis site" description="Loss of activity." evidence="2">
    <original>C</original>
    <variation>S</variation>
    <location>
        <position position="43"/>
    </location>
</feature>
<feature type="mutagenesis site" description="Reduces activity by 92%. Loss of activity; when associated with F-419." evidence="3">
    <original>Y</original>
    <variation>F</variation>
    <location>
        <position position="361"/>
    </location>
</feature>
<feature type="mutagenesis site" description="Reduces activity by 80%. Loss of activity; when associated with F-361." evidence="3">
    <original>Y</original>
    <variation>F</variation>
    <location>
        <position position="419"/>
    </location>
</feature>
<feature type="strand" evidence="6">
    <location>
        <begin position="4"/>
        <end position="7"/>
    </location>
</feature>
<feature type="helix" evidence="6">
    <location>
        <begin position="13"/>
        <end position="23"/>
    </location>
</feature>
<feature type="strand" evidence="6">
    <location>
        <begin position="25"/>
        <end position="27"/>
    </location>
</feature>
<feature type="strand" evidence="6">
    <location>
        <begin position="29"/>
        <end position="36"/>
    </location>
</feature>
<feature type="strand" evidence="6">
    <location>
        <begin position="38"/>
        <end position="40"/>
    </location>
</feature>
<feature type="helix" evidence="6">
    <location>
        <begin position="42"/>
        <end position="44"/>
    </location>
</feature>
<feature type="helix" evidence="6">
    <location>
        <begin position="45"/>
        <end position="49"/>
    </location>
</feature>
<feature type="helix" evidence="6">
    <location>
        <begin position="56"/>
        <end position="59"/>
    </location>
</feature>
<feature type="helix" evidence="6">
    <location>
        <begin position="64"/>
        <end position="71"/>
    </location>
</feature>
<feature type="strand" evidence="6">
    <location>
        <begin position="74"/>
        <end position="77"/>
    </location>
</feature>
<feature type="strand" evidence="6">
    <location>
        <begin position="79"/>
        <end position="85"/>
    </location>
</feature>
<feature type="turn" evidence="6">
    <location>
        <begin position="86"/>
        <end position="89"/>
    </location>
</feature>
<feature type="strand" evidence="6">
    <location>
        <begin position="90"/>
        <end position="95"/>
    </location>
</feature>
<feature type="turn" evidence="6">
    <location>
        <begin position="96"/>
        <end position="99"/>
    </location>
</feature>
<feature type="strand" evidence="6">
    <location>
        <begin position="100"/>
        <end position="105"/>
    </location>
</feature>
<feature type="strand" evidence="6">
    <location>
        <begin position="107"/>
        <end position="111"/>
    </location>
</feature>
<feature type="strand" evidence="6">
    <location>
        <begin position="115"/>
        <end position="117"/>
    </location>
</feature>
<feature type="helix" evidence="6">
    <location>
        <begin position="133"/>
        <end position="146"/>
    </location>
</feature>
<feature type="strand" evidence="6">
    <location>
        <begin position="150"/>
        <end position="154"/>
    </location>
</feature>
<feature type="helix" evidence="6">
    <location>
        <begin position="158"/>
        <end position="170"/>
    </location>
</feature>
<feature type="strand" evidence="6">
    <location>
        <begin position="173"/>
        <end position="181"/>
    </location>
</feature>
<feature type="helix" evidence="6">
    <location>
        <begin position="189"/>
        <end position="192"/>
    </location>
</feature>
<feature type="helix" evidence="6">
    <location>
        <begin position="193"/>
        <end position="201"/>
    </location>
</feature>
<feature type="strand" evidence="6">
    <location>
        <begin position="206"/>
        <end position="209"/>
    </location>
</feature>
<feature type="strand" evidence="6">
    <location>
        <begin position="212"/>
        <end position="216"/>
    </location>
</feature>
<feature type="strand" evidence="6">
    <location>
        <begin position="219"/>
        <end position="222"/>
    </location>
</feature>
<feature type="strand" evidence="6">
    <location>
        <begin position="227"/>
        <end position="229"/>
    </location>
</feature>
<feature type="strand" evidence="6">
    <location>
        <begin position="231"/>
        <end position="235"/>
    </location>
</feature>
<feature type="strand" evidence="6">
    <location>
        <begin position="239"/>
        <end position="242"/>
    </location>
</feature>
<feature type="helix" evidence="6">
    <location>
        <begin position="244"/>
        <end position="246"/>
    </location>
</feature>
<feature type="strand" evidence="6">
    <location>
        <begin position="272"/>
        <end position="274"/>
    </location>
</feature>
<feature type="helix" evidence="6">
    <location>
        <begin position="276"/>
        <end position="278"/>
    </location>
</feature>
<feature type="strand" evidence="6">
    <location>
        <begin position="279"/>
        <end position="290"/>
    </location>
</feature>
<feature type="helix" evidence="6">
    <location>
        <begin position="295"/>
        <end position="310"/>
    </location>
</feature>
<feature type="strand" evidence="6">
    <location>
        <begin position="324"/>
        <end position="328"/>
    </location>
</feature>
<feature type="strand" evidence="6">
    <location>
        <begin position="331"/>
        <end position="338"/>
    </location>
</feature>
<feature type="helix" evidence="6">
    <location>
        <begin position="340"/>
        <end position="345"/>
    </location>
</feature>
<feature type="strand" evidence="6">
    <location>
        <begin position="348"/>
        <end position="358"/>
    </location>
</feature>
<feature type="strand" evidence="6">
    <location>
        <begin position="362"/>
        <end position="364"/>
    </location>
</feature>
<feature type="strand" evidence="6">
    <location>
        <begin position="367"/>
        <end position="375"/>
    </location>
</feature>
<feature type="turn" evidence="6">
    <location>
        <begin position="376"/>
        <end position="378"/>
    </location>
</feature>
<feature type="strand" evidence="6">
    <location>
        <begin position="380"/>
        <end position="391"/>
    </location>
</feature>
<feature type="helix" evidence="6">
    <location>
        <begin position="392"/>
        <end position="404"/>
    </location>
</feature>
<feature type="helix" evidence="6">
    <location>
        <begin position="410"/>
        <end position="414"/>
    </location>
</feature>
<feature type="turn" evidence="6">
    <location>
        <begin position="421"/>
        <end position="423"/>
    </location>
</feature>
<feature type="helix" evidence="6">
    <location>
        <begin position="429"/>
        <end position="435"/>
    </location>
</feature>
<evidence type="ECO:0000250" key="1"/>
<evidence type="ECO:0000269" key="2">
    <source>
    </source>
</evidence>
<evidence type="ECO:0000269" key="3">
    <source>
    </source>
</evidence>
<evidence type="ECO:0000269" key="4">
    <source>
    </source>
</evidence>
<evidence type="ECO:0000305" key="5"/>
<evidence type="ECO:0007829" key="6">
    <source>
        <dbReference type="PDB" id="1YQZ"/>
    </source>
</evidence>
<dbReference type="EC" id="1.8.1.14"/>
<dbReference type="EMBL" id="AF041467">
    <property type="protein sequence ID" value="AAB97073.1"/>
    <property type="molecule type" value="Genomic_DNA"/>
</dbReference>
<dbReference type="EMBL" id="CP000253">
    <property type="protein sequence ID" value="ABD30033.1"/>
    <property type="molecule type" value="Genomic_DNA"/>
</dbReference>
<dbReference type="RefSeq" id="YP_499461.1">
    <property type="nucleotide sequence ID" value="NC_007795.1"/>
</dbReference>
<dbReference type="PDB" id="1YQZ">
    <property type="method" value="X-ray"/>
    <property type="resolution" value="1.54 A"/>
    <property type="chains" value="A/B=1-438"/>
</dbReference>
<dbReference type="PDBsum" id="1YQZ"/>
<dbReference type="SMR" id="O52582"/>
<dbReference type="STRING" id="93061.SAOUHSC_00908"/>
<dbReference type="PaxDb" id="1280-SAXN108_0965"/>
<dbReference type="GeneID" id="3920795"/>
<dbReference type="KEGG" id="sao:SAOUHSC_00908"/>
<dbReference type="PATRIC" id="fig|93061.5.peg.829"/>
<dbReference type="eggNOG" id="COG0446">
    <property type="taxonomic scope" value="Bacteria"/>
</dbReference>
<dbReference type="HOGENOM" id="CLU_003291_1_3_9"/>
<dbReference type="OrthoDB" id="9802028at2"/>
<dbReference type="BRENDA" id="1.8.1.14">
    <property type="organism ID" value="3352"/>
</dbReference>
<dbReference type="SABIO-RK" id="O52582"/>
<dbReference type="EvolutionaryTrace" id="O52582"/>
<dbReference type="Proteomes" id="UP000008816">
    <property type="component" value="Chromosome"/>
</dbReference>
<dbReference type="GO" id="GO:0050451">
    <property type="term" value="F:CoA-disulfide reductase (NADPH) activity"/>
    <property type="evidence" value="ECO:0007669"/>
    <property type="project" value="UniProtKB-UniRule"/>
</dbReference>
<dbReference type="GO" id="GO:0050660">
    <property type="term" value="F:flavin adenine dinucleotide binding"/>
    <property type="evidence" value="ECO:0007669"/>
    <property type="project" value="UniProtKB-UniRule"/>
</dbReference>
<dbReference type="GO" id="GO:0050661">
    <property type="term" value="F:NADP binding"/>
    <property type="evidence" value="ECO:0007669"/>
    <property type="project" value="UniProtKB-UniRule"/>
</dbReference>
<dbReference type="GO" id="GO:0003756">
    <property type="term" value="F:protein disulfide isomerase activity"/>
    <property type="evidence" value="ECO:0007669"/>
    <property type="project" value="UniProtKB-UniRule"/>
</dbReference>
<dbReference type="Gene3D" id="3.30.390.30">
    <property type="match status" value="1"/>
</dbReference>
<dbReference type="Gene3D" id="3.50.50.60">
    <property type="entry name" value="FAD/NAD(P)-binding domain"/>
    <property type="match status" value="2"/>
</dbReference>
<dbReference type="HAMAP" id="MF_01608">
    <property type="entry name" value="CoA_diS_reduct"/>
    <property type="match status" value="1"/>
</dbReference>
<dbReference type="InterPro" id="IPR017758">
    <property type="entry name" value="CoA_disulphide_reductase"/>
</dbReference>
<dbReference type="InterPro" id="IPR023536">
    <property type="entry name" value="CoA_disulphide_reductase_staph"/>
</dbReference>
<dbReference type="InterPro" id="IPR050260">
    <property type="entry name" value="FAD-bd_OxRdtase"/>
</dbReference>
<dbReference type="InterPro" id="IPR036188">
    <property type="entry name" value="FAD/NAD-bd_sf"/>
</dbReference>
<dbReference type="InterPro" id="IPR023753">
    <property type="entry name" value="FAD/NAD-binding_dom"/>
</dbReference>
<dbReference type="InterPro" id="IPR016156">
    <property type="entry name" value="FAD/NAD-linked_Rdtase_dimer_sf"/>
</dbReference>
<dbReference type="InterPro" id="IPR004099">
    <property type="entry name" value="Pyr_nucl-diS_OxRdtase_dimer"/>
</dbReference>
<dbReference type="NCBIfam" id="TIGR03385">
    <property type="entry name" value="CoA_CoA_reduc"/>
    <property type="match status" value="1"/>
</dbReference>
<dbReference type="NCBIfam" id="NF010037">
    <property type="entry name" value="PRK13512.1"/>
    <property type="match status" value="1"/>
</dbReference>
<dbReference type="PANTHER" id="PTHR43429:SF1">
    <property type="entry name" value="NAD(P)H SULFUR OXIDOREDUCTASE (COA-DEPENDENT)"/>
    <property type="match status" value="1"/>
</dbReference>
<dbReference type="PANTHER" id="PTHR43429">
    <property type="entry name" value="PYRIDINE NUCLEOTIDE-DISULFIDE OXIDOREDUCTASE DOMAIN-CONTAINING"/>
    <property type="match status" value="1"/>
</dbReference>
<dbReference type="Pfam" id="PF07992">
    <property type="entry name" value="Pyr_redox_2"/>
    <property type="match status" value="1"/>
</dbReference>
<dbReference type="Pfam" id="PF02852">
    <property type="entry name" value="Pyr_redox_dim"/>
    <property type="match status" value="1"/>
</dbReference>
<dbReference type="PRINTS" id="PR00368">
    <property type="entry name" value="FADPNR"/>
</dbReference>
<dbReference type="PRINTS" id="PR00411">
    <property type="entry name" value="PNDRDTASEI"/>
</dbReference>
<dbReference type="SUPFAM" id="SSF51905">
    <property type="entry name" value="FAD/NAD(P)-binding domain"/>
    <property type="match status" value="1"/>
</dbReference>
<dbReference type="SUPFAM" id="SSF55424">
    <property type="entry name" value="FAD/NAD-linked reductases, dimerisation (C-terminal) domain"/>
    <property type="match status" value="1"/>
</dbReference>
<protein>
    <recommendedName>
        <fullName>Coenzyme A disulfide reductase</fullName>
        <shortName>CoA-disulfide reductase</shortName>
        <shortName>CoADR</shortName>
        <ecNumber>1.8.1.14</ecNumber>
    </recommendedName>
</protein>
<name>CDR_STAA8</name>
<proteinExistence type="evidence at protein level"/>
<accession>O52582</accession>
<accession>Q2FZT2</accession>
<reference key="1">
    <citation type="journal article" date="1998" name="J. Biol. Chem.">
        <title>Staphylococcus aureus coenzyme A disulfide reductase, a new subfamily of pyridine nucleotide-disulfide oxidoreductase. Sequence, expression, and analysis of cdr.</title>
        <authorList>
            <person name="delCardayre S.B."/>
            <person name="Davies J.E."/>
        </authorList>
    </citation>
    <scope>NUCLEOTIDE SEQUENCE [GENOMIC DNA]</scope>
    <scope>PROTEIN SEQUENCE OF 2-15 AND 193-208</scope>
</reference>
<reference key="2">
    <citation type="book" date="2006" name="Gram positive pathogens, 2nd edition">
        <title>The Staphylococcus aureus NCTC 8325 genome.</title>
        <editorList>
            <person name="Fischetti V."/>
            <person name="Novick R."/>
            <person name="Ferretti J."/>
            <person name="Portnoy D."/>
            <person name="Rood J."/>
        </editorList>
        <authorList>
            <person name="Gillaspy A.F."/>
            <person name="Worrell V."/>
            <person name="Orvis J."/>
            <person name="Roe B.A."/>
            <person name="Dyer D.W."/>
            <person name="Iandolo J.J."/>
        </authorList>
    </citation>
    <scope>NUCLEOTIDE SEQUENCE [LARGE SCALE GENOMIC DNA]</scope>
    <source>
        <strain>NCTC 8325 / PS 47</strain>
    </source>
</reference>
<reference key="3">
    <citation type="journal article" date="1998" name="J. Biol. Chem.">
        <title>Coenzyme A disulfide reductase, the primary low molecular weight disulfide reductase from Staphylococcus aureus. Purification and characterization of the native enzyme.</title>
        <authorList>
            <person name="delCardayre S.B."/>
            <person name="Stock K.P."/>
            <person name="Newton G.L."/>
            <person name="Fahey R.C."/>
            <person name="Davies J.E."/>
        </authorList>
    </citation>
    <scope>CHARACTERIZATION</scope>
</reference>
<reference key="4">
    <citation type="journal article" date="1999" name="Biochemistry">
        <title>Coenzyme A-disulfide reductase from Staphylococcus aureus: evidence for asymmetric behavior on interaction with pyridine nucleotides.</title>
        <authorList>
            <person name="Luba J."/>
            <person name="Charrier V."/>
            <person name="Claiborne A."/>
        </authorList>
    </citation>
    <scope>CHARACTERIZATION</scope>
    <scope>ACTIVE SITE</scope>
    <scope>MUTAGENESIS OF CYS-43</scope>
    <scope>MASS SPECTROMETRY</scope>
</reference>
<reference key="5">
    <citation type="journal article" date="2006" name="Biochemistry">
        <title>Structure of coenzyme A-disulfide reductase from Staphylococcus aureus at 1.54 A resolution.</title>
        <authorList>
            <person name="Mallett T.C."/>
            <person name="Wallen J.R."/>
            <person name="Karplus P.A."/>
            <person name="Sakai H."/>
            <person name="Tsukihara T."/>
            <person name="Claiborne A."/>
        </authorList>
    </citation>
    <scope>X-RAY CRYSTALLOGRAPHY (1.54 ANGSTROMS) IN COMPLEX WITH FAD AND SUBSTRATE</scope>
    <scope>COFACTOR</scope>
    <scope>SUBUNIT</scope>
    <scope>MUTAGENESIS OF TYR-361 AND TYR-419</scope>
</reference>
<gene>
    <name type="primary">cdr</name>
    <name type="ordered locus">SAOUHSC_00908</name>
</gene>
<sequence>MPKIVVVGAVAGGATCASQIRRLDKESDIIIFEKDRDMSFANCALPYVIGEVVEDRRYALAYTPEKFYDRKQITVKTYHEVIAINDERQTVSVLNRKTNEQFEESYDKLILSPGASANSLGFESDITFTLRNLEDTDAIDQFIKANQVDKVLVVGAGYVSLEVLENLNERGLHPTLIHRSDKINKLMDADMNQPILDELDKREIPYRLNEEINAINGNEITFKSGKVEHYDMIIEGVGTHPNSKFIESSNIKLDRKGFIPVNDKFETNVPNIYAIGDIATSHYRHVDLPASVPLAWGAHRAASIVAEQIAGNDTIEFKGFLGNNIVKFFDYTFASVGVKPNELKQFDYKMVEVTQGAHANYYPGNSPLHLRVYYDTSNRQILRAAAVGKEGADKRIDVLSMAMMNQLTVDELTEFEVAYAPPYSHPKDLINMIGYKAK</sequence>
<comment type="function">
    <text>Catalyzes specifically the NADPH-dependent reduction of coenzyme A disulfide. Is also active with other disulfide substrates containing at least one 4'-phosphopantethienyl moiety such as 4,4'-diphosphopantethine, but is not able to reduce oxidized glutathione, cystine, pantethine, or H(2)O(2).</text>
</comment>
<comment type="catalytic activity">
    <reaction>
        <text>NADP(+) + 2 CoA = CoA-disulfide + NADPH + H(+)</text>
        <dbReference type="Rhea" id="RHEA:14705"/>
        <dbReference type="ChEBI" id="CHEBI:15378"/>
        <dbReference type="ChEBI" id="CHEBI:57287"/>
        <dbReference type="ChEBI" id="CHEBI:57783"/>
        <dbReference type="ChEBI" id="CHEBI:58349"/>
        <dbReference type="ChEBI" id="CHEBI:62209"/>
        <dbReference type="EC" id="1.8.1.14"/>
    </reaction>
</comment>
<comment type="cofactor">
    <cofactor evidence="3">
        <name>FAD</name>
        <dbReference type="ChEBI" id="CHEBI:57692"/>
    </cofactor>
    <text evidence="3">Binds 1 FAD per subunit.</text>
</comment>
<comment type="biophysicochemical properties">
    <kinetics>
        <KM>2 uM for NADPH</KM>
        <KM>11 uM for CoA disulfide</KM>
        <KM>140 uM for 3'-dephospho-CoA disulfide</KM>
        <KM>80 uM for 4,4'-diphosphopantethine</KM>
        <KM>1100 uM for CoA glutathione mixed disulfide</KM>
    </kinetics>
    <phDependence>
        <text>Optimum pH is 7.0-8.0.</text>
    </phDependence>
</comment>
<comment type="subunit">
    <text evidence="3">Homodimer.</text>
</comment>
<comment type="domain">
    <text>Contains 2 FAD binding domains and a single NADPH binding domain.</text>
</comment>
<comment type="mass spectrometry"/>
<comment type="miscellaneous">
    <text>Reduction of disulfides occurs by a thiol-disulfide exchange reaction, but involves only a single catalytic cysteine residue that forms a stable mixed disulfide with CoA during catalysis.</text>
</comment>
<comment type="similarity">
    <text evidence="5">Belongs to the class-III pyridine nucleotide-disulfide oxidoreductase family.</text>
</comment>
<keyword id="KW-0002">3D-structure</keyword>
<keyword id="KW-0903">Direct protein sequencing</keyword>
<keyword id="KW-0274">FAD</keyword>
<keyword id="KW-0285">Flavoprotein</keyword>
<keyword id="KW-0521">NADP</keyword>
<keyword id="KW-0560">Oxidoreductase</keyword>
<keyword id="KW-0676">Redox-active center</keyword>
<keyword id="KW-1185">Reference proteome</keyword>
<organism>
    <name type="scientific">Staphylococcus aureus (strain NCTC 8325 / PS 47)</name>
    <dbReference type="NCBI Taxonomy" id="93061"/>
    <lineage>
        <taxon>Bacteria</taxon>
        <taxon>Bacillati</taxon>
        <taxon>Bacillota</taxon>
        <taxon>Bacilli</taxon>
        <taxon>Bacillales</taxon>
        <taxon>Staphylococcaceae</taxon>
        <taxon>Staphylococcus</taxon>
    </lineage>
</organism>